<accession>Q9ZE93</accession>
<keyword id="KW-1185">Reference proteome</keyword>
<name>Y052_RICPR</name>
<organism>
    <name type="scientific">Rickettsia prowazekii (strain Madrid E)</name>
    <dbReference type="NCBI Taxonomy" id="272947"/>
    <lineage>
        <taxon>Bacteria</taxon>
        <taxon>Pseudomonadati</taxon>
        <taxon>Pseudomonadota</taxon>
        <taxon>Alphaproteobacteria</taxon>
        <taxon>Rickettsiales</taxon>
        <taxon>Rickettsiaceae</taxon>
        <taxon>Rickettsieae</taxon>
        <taxon>Rickettsia</taxon>
        <taxon>typhus group</taxon>
    </lineage>
</organism>
<feature type="chain" id="PRO_0000101306" description="Uncharacterized protein RP052">
    <location>
        <begin position="1"/>
        <end position="91"/>
    </location>
</feature>
<protein>
    <recommendedName>
        <fullName>Uncharacterized protein RP052</fullName>
    </recommendedName>
</protein>
<proteinExistence type="predicted"/>
<sequence>MIIKCSNDELDIVQKIQANIFCKENTKKLLDMRSSNLVPLTRIDFESFDSHLINLSNGIYALGMTHMLCFTKTVSKVNSIINSLVTLEEAA</sequence>
<reference key="1">
    <citation type="journal article" date="1998" name="Nature">
        <title>The genome sequence of Rickettsia prowazekii and the origin of mitochondria.</title>
        <authorList>
            <person name="Andersson S.G.E."/>
            <person name="Zomorodipour A."/>
            <person name="Andersson J.O."/>
            <person name="Sicheritz-Ponten T."/>
            <person name="Alsmark U.C.M."/>
            <person name="Podowski R.M."/>
            <person name="Naeslund A.K."/>
            <person name="Eriksson A.-S."/>
            <person name="Winkler H.H."/>
            <person name="Kurland C.G."/>
        </authorList>
    </citation>
    <scope>NUCLEOTIDE SEQUENCE [LARGE SCALE GENOMIC DNA]</scope>
    <source>
        <strain>Madrid E</strain>
    </source>
</reference>
<dbReference type="EMBL" id="AJ235270">
    <property type="protein sequence ID" value="CAA14523.1"/>
    <property type="molecule type" value="Genomic_DNA"/>
</dbReference>
<dbReference type="PIR" id="D71713">
    <property type="entry name" value="D71713"/>
</dbReference>
<dbReference type="RefSeq" id="NP_220446.1">
    <property type="nucleotide sequence ID" value="NC_000963.1"/>
</dbReference>
<dbReference type="RefSeq" id="WP_010886199.1">
    <property type="nucleotide sequence ID" value="NC_000963.1"/>
</dbReference>
<dbReference type="EnsemblBacteria" id="CAA14523">
    <property type="protein sequence ID" value="CAA14523"/>
    <property type="gene ID" value="CAA14523"/>
</dbReference>
<dbReference type="KEGG" id="rpr:RP052"/>
<dbReference type="PATRIC" id="fig|272947.5.peg.53"/>
<dbReference type="HOGENOM" id="CLU_2603790_0_0_5"/>
<dbReference type="Proteomes" id="UP000002480">
    <property type="component" value="Chromosome"/>
</dbReference>
<gene>
    <name type="ordered locus">RP052</name>
</gene>